<keyword id="KW-1003">Cell membrane</keyword>
<keyword id="KW-1015">Disulfide bond</keyword>
<keyword id="KW-0325">Glycoprotein</keyword>
<keyword id="KW-0336">GPI-anchor</keyword>
<keyword id="KW-0449">Lipoprotein</keyword>
<keyword id="KW-0461">Malaria</keyword>
<keyword id="KW-0472">Membrane</keyword>
<keyword id="KW-1185">Reference proteome</keyword>
<keyword id="KW-0677">Repeat</keyword>
<keyword id="KW-0732">Signal</keyword>
<accession>Q8I1Y4</accession>
<feature type="signal peptide" evidence="2">
    <location>
        <begin position="1"/>
        <end position="41"/>
    </location>
</feature>
<feature type="chain" id="PRO_0000423573" description="Sporozoite surface protein P36p">
    <location>
        <begin position="42"/>
        <end position="455"/>
    </location>
</feature>
<feature type="propeptide" id="PRO_0000423574" description="Removed in mature form" evidence="2">
    <location>
        <begin position="456"/>
        <end position="478"/>
    </location>
</feature>
<feature type="domain" description="6-Cys 1">
    <location>
        <begin position="42"/>
        <end position="178"/>
    </location>
</feature>
<feature type="domain" description="6-Cys 2">
    <location>
        <begin position="181"/>
        <end position="326"/>
    </location>
</feature>
<feature type="lipid moiety-binding region" description="GPI-anchor amidated serine" evidence="2">
    <location>
        <position position="455"/>
    </location>
</feature>
<feature type="glycosylation site" description="N-linked (GlcNAc...) asparagine" evidence="2">
    <location>
        <position position="109"/>
    </location>
</feature>
<feature type="glycosylation site" description="N-linked (GlcNAc...) asparagine" evidence="2">
    <location>
        <position position="138"/>
    </location>
</feature>
<feature type="glycosylation site" description="N-linked (GlcNAc...) asparagine" evidence="2">
    <location>
        <position position="229"/>
    </location>
</feature>
<feature type="glycosylation site" description="N-linked (GlcNAc...) asparagine" evidence="2">
    <location>
        <position position="279"/>
    </location>
</feature>
<feature type="glycosylation site" description="N-linked (GlcNAc...) asparagine" evidence="2">
    <location>
        <position position="291"/>
    </location>
</feature>
<feature type="disulfide bond" evidence="1">
    <location>
        <begin position="59"/>
        <end position="71"/>
    </location>
</feature>
<feature type="disulfide bond" evidence="1">
    <location>
        <begin position="85"/>
        <end position="159"/>
    </location>
</feature>
<feature type="disulfide bond" evidence="1">
    <location>
        <begin position="102"/>
        <end position="157"/>
    </location>
</feature>
<feature type="disulfide bond" evidence="1">
    <location>
        <begin position="185"/>
        <end position="209"/>
    </location>
</feature>
<feature type="disulfide bond" evidence="1">
    <location>
        <begin position="223"/>
        <end position="302"/>
    </location>
</feature>
<feature type="disulfide bond" evidence="1">
    <location>
        <begin position="243"/>
        <end position="300"/>
    </location>
</feature>
<proteinExistence type="inferred from homology"/>
<comment type="function">
    <text evidence="3 4">Involved in sporozoite infection of hepatocytes and replication therein.</text>
</comment>
<comment type="subcellular location">
    <subcellularLocation>
        <location evidence="1">Cell surface</location>
    </subcellularLocation>
    <subcellularLocation>
        <location evidence="1">Cell membrane</location>
        <topology evidence="1">Lipid-anchor</topology>
        <topology evidence="1">GPI-anchor</topology>
    </subcellularLocation>
    <text evidence="1">Present on the surface of sporozoites.</text>
</comment>
<comment type="disruption phenotype">
    <text evidence="3 4">Attenuated parasites that cannot commit to infection, even when they encounter with hepatocytes, resulting in continuous traversal of hepatocytes.</text>
</comment>
<protein>
    <recommendedName>
        <fullName>Sporozoite surface protein P36p</fullName>
    </recommendedName>
    <alternativeName>
        <fullName>Sporozoite surface protein P52</fullName>
    </alternativeName>
</protein>
<organism>
    <name type="scientific">Plasmodium falciparum (isolate 3D7)</name>
    <dbReference type="NCBI Taxonomy" id="36329"/>
    <lineage>
        <taxon>Eukaryota</taxon>
        <taxon>Sar</taxon>
        <taxon>Alveolata</taxon>
        <taxon>Apicomplexa</taxon>
        <taxon>Aconoidasida</taxon>
        <taxon>Haemosporida</taxon>
        <taxon>Plasmodiidae</taxon>
        <taxon>Plasmodium</taxon>
        <taxon>Plasmodium (Laverania)</taxon>
    </lineage>
</organism>
<reference key="1">
    <citation type="journal article" date="2002" name="Nature">
        <title>Genome sequence of the human malaria parasite Plasmodium falciparum.</title>
        <authorList>
            <person name="Gardner M.J."/>
            <person name="Hall N."/>
            <person name="Fung E."/>
            <person name="White O."/>
            <person name="Berriman M."/>
            <person name="Hyman R.W."/>
            <person name="Carlton J.M."/>
            <person name="Pain A."/>
            <person name="Nelson K.E."/>
            <person name="Bowman S."/>
            <person name="Paulsen I.T."/>
            <person name="James K.D."/>
            <person name="Eisen J.A."/>
            <person name="Rutherford K.M."/>
            <person name="Salzberg S.L."/>
            <person name="Craig A."/>
            <person name="Kyes S."/>
            <person name="Chan M.-S."/>
            <person name="Nene V."/>
            <person name="Shallom S.J."/>
            <person name="Suh B."/>
            <person name="Peterson J."/>
            <person name="Angiuoli S."/>
            <person name="Pertea M."/>
            <person name="Allen J."/>
            <person name="Selengut J."/>
            <person name="Haft D."/>
            <person name="Mather M.W."/>
            <person name="Vaidya A.B."/>
            <person name="Martin D.M.A."/>
            <person name="Fairlamb A.H."/>
            <person name="Fraunholz M.J."/>
            <person name="Roos D.S."/>
            <person name="Ralph S.A."/>
            <person name="McFadden G.I."/>
            <person name="Cummings L.M."/>
            <person name="Subramanian G.M."/>
            <person name="Mungall C."/>
            <person name="Venter J.C."/>
            <person name="Carucci D.J."/>
            <person name="Hoffman S.L."/>
            <person name="Newbold C."/>
            <person name="Davis R.W."/>
            <person name="Fraser C.M."/>
            <person name="Barrell B.G."/>
        </authorList>
    </citation>
    <scope>NUCLEOTIDE SEQUENCE [LARGE SCALE GENOMIC DNA]</scope>
    <source>
        <strain>3D7</strain>
    </source>
</reference>
<reference key="2">
    <citation type="journal article" date="2002" name="Nature">
        <title>Sequence of Plasmodium falciparum chromosomes 1, 3-9 and 13.</title>
        <authorList>
            <person name="Hall N."/>
            <person name="Pain A."/>
            <person name="Berriman M."/>
            <person name="Churcher C.M."/>
            <person name="Harris B."/>
            <person name="Harris D."/>
            <person name="Mungall K.L."/>
            <person name="Bowman S."/>
            <person name="Atkin R."/>
            <person name="Baker S."/>
            <person name="Barron A."/>
            <person name="Brooks K."/>
            <person name="Buckee C.O."/>
            <person name="Burrows C."/>
            <person name="Cherevach I."/>
            <person name="Chillingworth C."/>
            <person name="Chillingworth T."/>
            <person name="Christodoulou Z."/>
            <person name="Clark L."/>
            <person name="Clark R."/>
            <person name="Corton C."/>
            <person name="Cronin A."/>
            <person name="Davies R.M."/>
            <person name="Davis P."/>
            <person name="Dear P."/>
            <person name="Dearden F."/>
            <person name="Doggett J."/>
            <person name="Feltwell T."/>
            <person name="Goble A."/>
            <person name="Goodhead I."/>
            <person name="Gwilliam R."/>
            <person name="Hamlin N."/>
            <person name="Hance Z."/>
            <person name="Harper D."/>
            <person name="Hauser H."/>
            <person name="Hornsby T."/>
            <person name="Holroyd S."/>
            <person name="Horrocks P."/>
            <person name="Humphray S."/>
            <person name="Jagels K."/>
            <person name="James K.D."/>
            <person name="Johnson D."/>
            <person name="Kerhornou A."/>
            <person name="Knights A."/>
            <person name="Konfortov B."/>
            <person name="Kyes S."/>
            <person name="Larke N."/>
            <person name="Lawson D."/>
            <person name="Lennard N."/>
            <person name="Line A."/>
            <person name="Maddison M."/>
            <person name="Mclean J."/>
            <person name="Mooney P."/>
            <person name="Moule S."/>
            <person name="Murphy L."/>
            <person name="Oliver K."/>
            <person name="Ormond D."/>
            <person name="Price C."/>
            <person name="Quail M.A."/>
            <person name="Rabbinowitsch E."/>
            <person name="Rajandream M.A."/>
            <person name="Rutter S."/>
            <person name="Rutherford K.M."/>
            <person name="Sanders M."/>
            <person name="Simmonds M."/>
            <person name="Seeger K."/>
            <person name="Sharp S."/>
            <person name="Smith R."/>
            <person name="Squares R."/>
            <person name="Squares S."/>
            <person name="Stevens K."/>
            <person name="Taylor K."/>
            <person name="Tivey A."/>
            <person name="Unwin L."/>
            <person name="Whitehead S."/>
            <person name="Woodward J.R."/>
            <person name="Sulston J.E."/>
            <person name="Craig A."/>
            <person name="Newbold C."/>
            <person name="Barrell B.G."/>
        </authorList>
    </citation>
    <scope>NUCLEOTIDE SEQUENCE [LARGE SCALE GENOMIC DNA]</scope>
    <source>
        <strain>3D7</strain>
    </source>
</reference>
<reference key="3">
    <citation type="journal article" date="2008" name="PLoS ONE">
        <title>Gene disruption of Plasmodium falciparum p52 results in attenuation of malaria liver stage development in cultured primary human hepatocytes.</title>
        <authorList>
            <person name="van Schaijk B.C."/>
            <person name="Janse C.J."/>
            <person name="van Gemert G.J."/>
            <person name="van Dijk M.R."/>
            <person name="Gego A."/>
            <person name="Franetich J.F."/>
            <person name="van de Vegte-Bolmer M."/>
            <person name="Yalaoui S."/>
            <person name="Silvie O."/>
            <person name="Hoffman S.L."/>
            <person name="Waters A.P."/>
            <person name="Mazier D."/>
            <person name="Sauerwein R.W."/>
            <person name="Khan S.M."/>
        </authorList>
    </citation>
    <scope>FUNCTION</scope>
    <scope>DISRUPTION PHENOTYPE</scope>
</reference>
<reference key="4">
    <citation type="journal article" date="2009" name="Proc. Natl. Acad. Sci. U.S.A.">
        <title>Preerythrocytic, live-attenuated Plasmodium falciparum vaccine candidates by design.</title>
        <authorList>
            <person name="VanBuskirk K.M."/>
            <person name="O'Neill M.T."/>
            <person name="De La Vega P."/>
            <person name="Maier A.G."/>
            <person name="Krzych U."/>
            <person name="Williams J."/>
            <person name="Dowler M.G."/>
            <person name="Sacci J.B. Jr."/>
            <person name="Kangwanrangsan N."/>
            <person name="Tsuboi T."/>
            <person name="Kneteman N.M."/>
            <person name="Heppner D.G. Jr."/>
            <person name="Murdock B.A."/>
            <person name="Mikolajczak S.A."/>
            <person name="Aly A.S."/>
            <person name="Cowman A.F."/>
            <person name="Kappe S.H."/>
        </authorList>
    </citation>
    <scope>FUNCTION</scope>
    <scope>DISRUPTION PHENOTYPE</scope>
</reference>
<sequence length="478" mass="56287">MYVLVLIHMCYHFTMKRKKLFVYFIFLSFIINFNFNININFVCSNVIQDVISIGNVDICVVNVNSDEAQECILNNEFGKLLLFVCNMNDAFSTTAKTHPENCPSRAFVNQSNPTENSPEVDTYSIYPNLFGTNENRLNDTYSLYSTPYSNMDIDFSCLCYGDKQDKVKHIMRINIKKTRKKIKGCDFGDNIPSKRDLTNSLSLNERSSCIIHAYSNDVLGINCFKKEINNSYNNNLELNPSNCFHDVYFGADLILNSKNVIPNSRVIPDPSSDVKLSRNHSFSSYLILPNNLTENIKISCTCKRDEFVGTMIIYTKNINSLMFDNNNNNNDEEQIFQNKYMKKKEYKKDEGNEYDKKMNTDDNYINNEEHHNNNQYNNYENKINNVNYNYDDISKYINEHYKNYDHEKNSKNSYKTNTNIHDQYDTYHYNNKYDLHSDRTRIRTRTFWQNLFGLSSSKYILFNNFLILFIFLIYIYST</sequence>
<gene>
    <name type="primary">PF52</name>
    <name type="synonym">PF36P</name>
    <name type="ORF">PFD0215c</name>
</gene>
<dbReference type="EMBL" id="AL844503">
    <property type="protein sequence ID" value="CAD49137.1"/>
    <property type="molecule type" value="Genomic_DNA"/>
</dbReference>
<dbReference type="RefSeq" id="XP_001351357.1">
    <property type="nucleotide sequence ID" value="XM_001351321.1"/>
</dbReference>
<dbReference type="SMR" id="Q8I1Y4"/>
<dbReference type="FunCoup" id="Q8I1Y4">
    <property type="interactions" value="668"/>
</dbReference>
<dbReference type="STRING" id="36329.Q8I1Y4"/>
<dbReference type="GlyCosmos" id="Q8I1Y4">
    <property type="glycosylation" value="5 sites, No reported glycans"/>
</dbReference>
<dbReference type="PaxDb" id="5833-PFD0215c"/>
<dbReference type="EnsemblProtists" id="CAD49137">
    <property type="protein sequence ID" value="CAD49137"/>
    <property type="gene ID" value="PF3D7_0404500"/>
</dbReference>
<dbReference type="KEGG" id="pfa:PF3D7_0404500"/>
<dbReference type="VEuPathDB" id="PlasmoDB:PF3D7_0404500"/>
<dbReference type="HOGENOM" id="CLU_579377_0_0_1"/>
<dbReference type="InParanoid" id="Q8I1Y4"/>
<dbReference type="OMA" id="LPKDMTM"/>
<dbReference type="OrthoDB" id="370202at2759"/>
<dbReference type="PhylomeDB" id="Q8I1Y4"/>
<dbReference type="Proteomes" id="UP000001450">
    <property type="component" value="Chromosome 4"/>
</dbReference>
<dbReference type="GO" id="GO:0009986">
    <property type="term" value="C:cell surface"/>
    <property type="evidence" value="ECO:0007669"/>
    <property type="project" value="UniProtKB-SubCell"/>
</dbReference>
<dbReference type="GO" id="GO:0005886">
    <property type="term" value="C:plasma membrane"/>
    <property type="evidence" value="ECO:0007669"/>
    <property type="project" value="UniProtKB-SubCell"/>
</dbReference>
<dbReference type="GO" id="GO:0098552">
    <property type="term" value="C:side of membrane"/>
    <property type="evidence" value="ECO:0007669"/>
    <property type="project" value="UniProtKB-KW"/>
</dbReference>
<dbReference type="FunFam" id="2.60.40.2860:FF:000026">
    <property type="entry name" value="6-cysteine protein"/>
    <property type="match status" value="1"/>
</dbReference>
<dbReference type="Gene3D" id="2.60.40.2860">
    <property type="match status" value="2"/>
</dbReference>
<dbReference type="InterPro" id="IPR010884">
    <property type="entry name" value="6_CYS_dom"/>
</dbReference>
<dbReference type="InterPro" id="IPR038160">
    <property type="entry name" value="6_CYS_dom_sf"/>
</dbReference>
<dbReference type="InterPro" id="IPR051444">
    <property type="entry name" value="Parasite_Repro/Invasion_Surf"/>
</dbReference>
<dbReference type="PANTHER" id="PTHR38796">
    <property type="match status" value="1"/>
</dbReference>
<dbReference type="PANTHER" id="PTHR38796:SF1">
    <property type="entry name" value="ANCHORED PROTEIN, PUTATIVE (AFU_ORTHOLOGUE AFUA_4G09600)-RELATED"/>
    <property type="match status" value="1"/>
</dbReference>
<dbReference type="Pfam" id="PF07422">
    <property type="entry name" value="s48_45"/>
    <property type="match status" value="1"/>
</dbReference>
<dbReference type="SMART" id="SM00970">
    <property type="entry name" value="s48_45"/>
    <property type="match status" value="1"/>
</dbReference>
<dbReference type="PROSITE" id="PS51701">
    <property type="entry name" value="6_CYS"/>
    <property type="match status" value="2"/>
</dbReference>
<evidence type="ECO:0000250" key="1"/>
<evidence type="ECO:0000255" key="2"/>
<evidence type="ECO:0000269" key="3">
    <source>
    </source>
</evidence>
<evidence type="ECO:0000269" key="4">
    <source>
    </source>
</evidence>
<name>PF36P_PLAF7</name>